<reference key="1">
    <citation type="journal article" date="2009" name="BMC Microbiol.">
        <title>The genome sequence of Geobacter metallireducens: features of metabolism, physiology and regulation common and dissimilar to Geobacter sulfurreducens.</title>
        <authorList>
            <person name="Aklujkar M."/>
            <person name="Krushkal J."/>
            <person name="DiBartolo G."/>
            <person name="Lapidus A."/>
            <person name="Land M.L."/>
            <person name="Lovley D.R."/>
        </authorList>
    </citation>
    <scope>NUCLEOTIDE SEQUENCE [LARGE SCALE GENOMIC DNA]</scope>
    <source>
        <strain>ATCC 53774 / DSM 7210 / GS-15</strain>
    </source>
</reference>
<organism>
    <name type="scientific">Geobacter metallireducens (strain ATCC 53774 / DSM 7210 / GS-15)</name>
    <dbReference type="NCBI Taxonomy" id="269799"/>
    <lineage>
        <taxon>Bacteria</taxon>
        <taxon>Pseudomonadati</taxon>
        <taxon>Thermodesulfobacteriota</taxon>
        <taxon>Desulfuromonadia</taxon>
        <taxon>Geobacterales</taxon>
        <taxon>Geobacteraceae</taxon>
        <taxon>Geobacter</taxon>
    </lineage>
</organism>
<comment type="function">
    <text evidence="1">Involved in the maturation of [NiFe] hydrogenases. Required for nickel insertion into the metal center of the hydrogenase.</text>
</comment>
<comment type="similarity">
    <text evidence="1">Belongs to the HypA/HybF family.</text>
</comment>
<sequence length="110" mass="11957">MHEMSITQSVVEICEKSAGGRRVLAVTLEIGDLSGVVPDAIEFCFEACTRDTLLEGARLVIERVPGRGECTSCGKEFPVRGYFDPCPACGAYGMRVVSGEELRVKELEVE</sequence>
<evidence type="ECO:0000255" key="1">
    <source>
        <dbReference type="HAMAP-Rule" id="MF_00213"/>
    </source>
</evidence>
<proteinExistence type="inferred from homology"/>
<name>HYPA_GEOMG</name>
<protein>
    <recommendedName>
        <fullName evidence="1">Hydrogenase maturation factor HypA</fullName>
    </recommendedName>
</protein>
<gene>
    <name evidence="1" type="primary">hypA</name>
    <name type="ordered locus">Gmet_3156</name>
</gene>
<keyword id="KW-0479">Metal-binding</keyword>
<keyword id="KW-0533">Nickel</keyword>
<keyword id="KW-1185">Reference proteome</keyword>
<keyword id="KW-0862">Zinc</keyword>
<accession>Q39QV5</accession>
<dbReference type="EMBL" id="CP000148">
    <property type="protein sequence ID" value="ABB33369.1"/>
    <property type="molecule type" value="Genomic_DNA"/>
</dbReference>
<dbReference type="RefSeq" id="WP_004513872.1">
    <property type="nucleotide sequence ID" value="NC_007517.1"/>
</dbReference>
<dbReference type="SMR" id="Q39QV5"/>
<dbReference type="STRING" id="269799.Gmet_3156"/>
<dbReference type="KEGG" id="gme:Gmet_3156"/>
<dbReference type="eggNOG" id="COG0375">
    <property type="taxonomic scope" value="Bacteria"/>
</dbReference>
<dbReference type="HOGENOM" id="CLU_126929_3_0_7"/>
<dbReference type="Proteomes" id="UP000007073">
    <property type="component" value="Chromosome"/>
</dbReference>
<dbReference type="GO" id="GO:0016151">
    <property type="term" value="F:nickel cation binding"/>
    <property type="evidence" value="ECO:0007669"/>
    <property type="project" value="UniProtKB-UniRule"/>
</dbReference>
<dbReference type="GO" id="GO:0008270">
    <property type="term" value="F:zinc ion binding"/>
    <property type="evidence" value="ECO:0007669"/>
    <property type="project" value="UniProtKB-UniRule"/>
</dbReference>
<dbReference type="GO" id="GO:0051604">
    <property type="term" value="P:protein maturation"/>
    <property type="evidence" value="ECO:0007669"/>
    <property type="project" value="InterPro"/>
</dbReference>
<dbReference type="GO" id="GO:0036211">
    <property type="term" value="P:protein modification process"/>
    <property type="evidence" value="ECO:0007669"/>
    <property type="project" value="UniProtKB-UniRule"/>
</dbReference>
<dbReference type="Gene3D" id="3.30.2320.80">
    <property type="match status" value="1"/>
</dbReference>
<dbReference type="HAMAP" id="MF_00213">
    <property type="entry name" value="HypA_HybF"/>
    <property type="match status" value="1"/>
</dbReference>
<dbReference type="InterPro" id="IPR020538">
    <property type="entry name" value="Hydgase_Ni_incorp_HypA/HybF_CS"/>
</dbReference>
<dbReference type="InterPro" id="IPR000688">
    <property type="entry name" value="HypA/HybF"/>
</dbReference>
<dbReference type="NCBIfam" id="TIGR00100">
    <property type="entry name" value="hypA"/>
    <property type="match status" value="1"/>
</dbReference>
<dbReference type="PANTHER" id="PTHR34535">
    <property type="entry name" value="HYDROGENASE MATURATION FACTOR HYPA"/>
    <property type="match status" value="1"/>
</dbReference>
<dbReference type="PANTHER" id="PTHR34535:SF3">
    <property type="entry name" value="HYDROGENASE MATURATION FACTOR HYPA"/>
    <property type="match status" value="1"/>
</dbReference>
<dbReference type="Pfam" id="PF01155">
    <property type="entry name" value="HypA"/>
    <property type="match status" value="1"/>
</dbReference>
<dbReference type="PIRSF" id="PIRSF004761">
    <property type="entry name" value="Hydrgn_mat_HypA"/>
    <property type="match status" value="1"/>
</dbReference>
<dbReference type="PROSITE" id="PS01249">
    <property type="entry name" value="HYPA"/>
    <property type="match status" value="1"/>
</dbReference>
<feature type="chain" id="PRO_1000023828" description="Hydrogenase maturation factor HypA">
    <location>
        <begin position="1"/>
        <end position="110"/>
    </location>
</feature>
<feature type="binding site" evidence="1">
    <location>
        <position position="2"/>
    </location>
    <ligand>
        <name>Ni(2+)</name>
        <dbReference type="ChEBI" id="CHEBI:49786"/>
    </ligand>
</feature>
<feature type="binding site" evidence="1">
    <location>
        <position position="70"/>
    </location>
    <ligand>
        <name>Zn(2+)</name>
        <dbReference type="ChEBI" id="CHEBI:29105"/>
    </ligand>
</feature>
<feature type="binding site" evidence="1">
    <location>
        <position position="73"/>
    </location>
    <ligand>
        <name>Zn(2+)</name>
        <dbReference type="ChEBI" id="CHEBI:29105"/>
    </ligand>
</feature>
<feature type="binding site" evidence="1">
    <location>
        <position position="86"/>
    </location>
    <ligand>
        <name>Zn(2+)</name>
        <dbReference type="ChEBI" id="CHEBI:29105"/>
    </ligand>
</feature>
<feature type="binding site" evidence="1">
    <location>
        <position position="89"/>
    </location>
    <ligand>
        <name>Zn(2+)</name>
        <dbReference type="ChEBI" id="CHEBI:29105"/>
    </ligand>
</feature>